<dbReference type="EMBL" id="D00942">
    <property type="protein sequence ID" value="BAA00788.1"/>
    <property type="molecule type" value="Genomic_RNA"/>
</dbReference>
<dbReference type="PIR" id="JU0369">
    <property type="entry name" value="WMWQTD"/>
</dbReference>
<dbReference type="GO" id="GO:0046740">
    <property type="term" value="P:transport of virus in host, cell to cell"/>
    <property type="evidence" value="ECO:0007669"/>
    <property type="project" value="UniProtKB-KW"/>
</dbReference>
<dbReference type="InterPro" id="IPR035284">
    <property type="entry name" value="DUF5428"/>
</dbReference>
<dbReference type="Pfam" id="PF17493">
    <property type="entry name" value="DUF5428"/>
    <property type="match status" value="1"/>
</dbReference>
<sequence>MENTENVRSGRNQREYSKERQQEGGYKEVSKAAVRKEGDVKQDMGPSVSMTVVGEKVEFTQHFHF</sequence>
<reference key="1">
    <citation type="journal article" date="1991" name="J. Gen. Virol.">
        <title>The complete nucleotide sequence of tobacco necrosis virus strain D.</title>
        <authorList>
            <person name="Coutts R.H.A."/>
            <person name="Rigden J.E."/>
            <person name="Slabas A.R."/>
            <person name="Lomonossoff G.P."/>
            <person name="Wise P.J."/>
        </authorList>
    </citation>
    <scope>NUCLEOTIDE SEQUENCE [GENOMIC RNA]</scope>
</reference>
<reference key="2">
    <citation type="submission" date="1996-04" db="EMBL/GenBank/DDBJ databases">
        <authorList>
            <person name="Coutts R.H.A."/>
        </authorList>
    </citation>
    <scope>SEQUENCE REVISION</scope>
</reference>
<name>MP8_TNVD</name>
<evidence type="ECO:0000256" key="1">
    <source>
        <dbReference type="SAM" id="MobiDB-lite"/>
    </source>
</evidence>
<evidence type="ECO:0000305" key="2"/>
<keyword id="KW-0813">Transport</keyword>
<keyword id="KW-0916">Viral movement protein</keyword>
<accession>P27211</accession>
<organism>
    <name type="scientific">Tobacco necrosis virus (strain D)</name>
    <name type="common">TNV-D</name>
    <dbReference type="NCBI Taxonomy" id="12056"/>
    <lineage>
        <taxon>Viruses</taxon>
        <taxon>Riboviria</taxon>
        <taxon>Orthornavirae</taxon>
        <taxon>Kitrinoviricota</taxon>
        <taxon>Tolucaviricetes</taxon>
        <taxon>Tolivirales</taxon>
        <taxon>Tombusviridae</taxon>
        <taxon>Procedovirinae</taxon>
        <taxon>Betanecrovirus</taxon>
        <taxon>Betanecrovirus nicotianae</taxon>
    </lineage>
</organism>
<gene>
    <name type="ORF">ORF2</name>
</gene>
<protein>
    <recommendedName>
        <fullName>Probable movement protein p8</fullName>
    </recommendedName>
</protein>
<proteinExistence type="inferred from homology"/>
<organismHost>
    <name type="scientific">Chenopodium amaranticolor</name>
    <dbReference type="NCBI Taxonomy" id="66262"/>
</organismHost>
<organismHost>
    <name type="scientific">Chenopodium quinoa</name>
    <name type="common">Quinoa</name>
    <dbReference type="NCBI Taxonomy" id="63459"/>
</organismHost>
<organismHost>
    <name type="scientific">Cucumis sativus</name>
    <name type="common">Cucumber</name>
    <dbReference type="NCBI Taxonomy" id="3659"/>
</organismHost>
<organismHost>
    <name type="scientific">Nicotiana clevelandii</name>
    <name type="common">Wild tobacco</name>
    <dbReference type="NCBI Taxonomy" id="81866"/>
</organismHost>
<organismHost>
    <name type="scientific">Nicotiana tabacum</name>
    <name type="common">Common tobacco</name>
    <dbReference type="NCBI Taxonomy" id="4097"/>
</organismHost>
<organismHost>
    <name type="scientific">Phaseolus vulgaris</name>
    <name type="common">Kidney bean</name>
    <name type="synonym">French bean</name>
    <dbReference type="NCBI Taxonomy" id="3885"/>
</organismHost>
<organismHost>
    <name type="scientific">Tulipa gesneriana</name>
    <name type="common">Garden tulip</name>
    <dbReference type="NCBI Taxonomy" id="13306"/>
</organismHost>
<feature type="chain" id="PRO_0000222901" description="Probable movement protein p8">
    <location>
        <begin position="1"/>
        <end position="65"/>
    </location>
</feature>
<feature type="region of interest" description="Disordered" evidence="1">
    <location>
        <begin position="1"/>
        <end position="47"/>
    </location>
</feature>
<feature type="compositionally biased region" description="Polar residues" evidence="1">
    <location>
        <begin position="1"/>
        <end position="10"/>
    </location>
</feature>
<feature type="compositionally biased region" description="Basic and acidic residues" evidence="1">
    <location>
        <begin position="12"/>
        <end position="42"/>
    </location>
</feature>
<comment type="function">
    <text evidence="2">Cell-to-cell movement.</text>
</comment>
<comment type="similarity">
    <text evidence="2">Belongs to the carmovirus/necrovirus/panicovirus movement protein p8 family.</text>
</comment>